<keyword id="KW-0002">3D-structure</keyword>
<keyword id="KW-0025">Alternative splicing</keyword>
<keyword id="KW-0027">Amidation</keyword>
<keyword id="KW-0165">Cleavage on pair of basic residues</keyword>
<keyword id="KW-0903">Direct protein sequencing</keyword>
<keyword id="KW-0372">Hormone</keyword>
<keyword id="KW-0597">Phosphoprotein</keyword>
<keyword id="KW-1267">Proteomics identification</keyword>
<keyword id="KW-1185">Reference proteome</keyword>
<keyword id="KW-0964">Secreted</keyword>
<keyword id="KW-0732">Signal</keyword>
<accession>P01282</accession>
<accession>Q5TCY8</accession>
<accession>Q5TCY9</accession>
<accession>Q96QK3</accession>
<organism>
    <name type="scientific">Homo sapiens</name>
    <name type="common">Human</name>
    <dbReference type="NCBI Taxonomy" id="9606"/>
    <lineage>
        <taxon>Eukaryota</taxon>
        <taxon>Metazoa</taxon>
        <taxon>Chordata</taxon>
        <taxon>Craniata</taxon>
        <taxon>Vertebrata</taxon>
        <taxon>Euteleostomi</taxon>
        <taxon>Mammalia</taxon>
        <taxon>Eutheria</taxon>
        <taxon>Euarchontoglires</taxon>
        <taxon>Primates</taxon>
        <taxon>Haplorrhini</taxon>
        <taxon>Catarrhini</taxon>
        <taxon>Hominidae</taxon>
        <taxon>Homo</taxon>
    </lineage>
</organism>
<name>VIP_HUMAN</name>
<proteinExistence type="evidence at protein level"/>
<sequence>MDTRNKAQLLVLLTLLSVLFSQTSAWPLYRAPSALRLGDRIPFEGANEPDQVSLKEDIDMLQNALAENDTPYYDVSRNARHADGVFTSDFSKLLGQLSAKKYLESLMGKRVSSNISEDPVPVKRHSDAVFTDNYTRLRKQMAVKKYLNSILNGKRSSEGESPDFPEELEK</sequence>
<comment type="function">
    <molecule>Vasoactive intestinal peptide</molecule>
    <text evidence="3 4 5 6 9">VIP is a neuropeptide involved in a diverse array of physiological processes through activating the PACAP subfamily of class B1 G protein-coupled receptors: VIP receptor 1 (VPR1) and VIP receptor 2 (VPR2) (PubMed:1318039, PubMed:36385145, PubMed:8933357). Abundantly expressed throughout the CNS and peripheral nervous systems where they primarily exert neuroprotective and immune modulatory roles (PubMed:3456568). Also causes vasodilation, lowers arterial blood pressure, stimulates myocardial contractility, increases glycogenolysis and relaxes the smooth muscle of trachea, stomach and gall bladder (PubMed:15013843).</text>
</comment>
<comment type="function">
    <text evidence="4 7">PHM-27 and PHV-42 are two bioactive forms from proteolysis of the same precursor protein, that cause vasodilation (PubMed:15013843, PubMed:3654650). PHM-27 is a potent agonist of the calcitonin receptor CALCR, with similar efficacy as calcitonin (PubMed:15013843).</text>
</comment>
<comment type="interaction">
    <interactant intactId="EBI-751454">
        <id>P01282</id>
    </interactant>
    <interactant intactId="EBI-2871277">
        <id>P27487</id>
        <label>DPP4</label>
    </interactant>
    <organismsDiffer>false</organismsDiffer>
    <experiments>2</experiments>
</comment>
<comment type="interaction">
    <interactant intactId="EBI-751454">
        <id>P01282</id>
    </interactant>
    <interactant intactId="EBI-4319803">
        <id>Q12884</id>
        <label>FAP</label>
    </interactant>
    <organismsDiffer>false</organismsDiffer>
    <experiments>2</experiments>
</comment>
<comment type="interaction">
    <interactant intactId="EBI-751454">
        <id>P01282</id>
    </interactant>
    <interactant intactId="EBI-347996">
        <id>O43765</id>
        <label>SGTA</label>
    </interactant>
    <organismsDiffer>false</organismsDiffer>
    <experiments>3</experiments>
</comment>
<comment type="interaction">
    <interactant intactId="EBI-12320391">
        <id>P01282-2</id>
    </interactant>
    <interactant intactId="EBI-11962928">
        <id>Q9UI47-2</id>
        <label>CTNNA3</label>
    </interactant>
    <organismsDiffer>false</organismsDiffer>
    <experiments>3</experiments>
</comment>
<comment type="interaction">
    <interactant intactId="EBI-12320391">
        <id>P01282-2</id>
    </interactant>
    <interactant intactId="EBI-2691601">
        <id>P10620</id>
        <label>MGST1</label>
    </interactant>
    <organismsDiffer>false</organismsDiffer>
    <experiments>3</experiments>
</comment>
<comment type="interaction">
    <interactant intactId="EBI-12320391">
        <id>P01282-2</id>
    </interactant>
    <interactant intactId="EBI-947187">
        <id>Q9UHD9</id>
        <label>UBQLN2</label>
    </interactant>
    <organismsDiffer>false</organismsDiffer>
    <experiments>3</experiments>
</comment>
<comment type="interaction">
    <interactant intactId="EBI-6656819">
        <id>PRO_0000011460</id>
    </interactant>
    <interactant intactId="EBI-3917984">
        <id>P32241</id>
        <label>VIPR1</label>
    </interactant>
    <organismsDiffer>false</organismsDiffer>
    <experiments>2</experiments>
</comment>
<comment type="subcellular location">
    <subcellularLocation>
        <location>Secreted</location>
    </subcellularLocation>
</comment>
<comment type="alternative products">
    <event type="alternative splicing"/>
    <isoform>
        <id>P01282-1</id>
        <name>1</name>
        <sequence type="displayed"/>
    </isoform>
    <isoform>
        <id>P01282-2</id>
        <name>2</name>
        <sequence type="described" ref="VSP_023256"/>
    </isoform>
</comment>
<comment type="similarity">
    <text evidence="13">Belongs to the glucagon family.</text>
</comment>
<comment type="online information" name="Wikipedia">
    <link uri="https://en.wikipedia.org/wiki/Vasoactive_intestinal_peptide"/>
    <text>Vasoactive intestinal peptide entry</text>
</comment>
<feature type="signal peptide" evidence="2">
    <location>
        <begin position="1"/>
        <end position="20"/>
    </location>
</feature>
<feature type="propeptide" id="PRO_0000011457">
    <location>
        <begin position="21"/>
        <end position="79"/>
    </location>
</feature>
<feature type="peptide" id="PRO_0000011458" description="Intestinal peptide PHV-42">
    <location>
        <begin position="81"/>
        <end position="122"/>
    </location>
</feature>
<feature type="peptide" id="PRO_0000011459" description="Intestinal peptide PHM-27">
    <location>
        <begin position="81"/>
        <end position="107"/>
    </location>
</feature>
<feature type="peptide" id="PRO_0000011460" description="Vasoactive intestinal peptide">
    <location>
        <begin position="125"/>
        <end position="152"/>
    </location>
</feature>
<feature type="propeptide" id="PRO_0000011461">
    <location>
        <begin position="156"/>
        <end position="170"/>
    </location>
</feature>
<feature type="modified residue" description="Phosphoserine" evidence="1">
    <location>
        <position position="76"/>
    </location>
</feature>
<feature type="modified residue" description="Methionine amide" evidence="8">
    <location>
        <position position="107"/>
    </location>
</feature>
<feature type="modified residue" description="Asparagine amide" evidence="8">
    <location>
        <position position="152"/>
    </location>
</feature>
<feature type="splice variant" id="VSP_023256" description="In isoform 2." evidence="11">
    <location>
        <position position="113"/>
    </location>
</feature>
<feature type="sequence conflict" description="In Ref. 8; AAA61286." evidence="13" ref="8">
    <original>QL</original>
    <variation>PP</variation>
    <location>
        <begin position="96"/>
        <end position="97"/>
    </location>
</feature>
<feature type="sequence conflict" description="In Ref. 4; AAA61288." evidence="13" ref="4">
    <original>S</original>
    <variation>L</variation>
    <location>
        <position position="116"/>
    </location>
</feature>
<feature type="sequence conflict" description="In Ref. 4; AAA61288." evidence="13" ref="4">
    <original>R</original>
    <variation>G</variation>
    <location>
        <position position="136"/>
    </location>
</feature>
<feature type="helix" evidence="16">
    <location>
        <begin position="126"/>
        <end position="149"/>
    </location>
</feature>
<protein>
    <recommendedName>
        <fullName>VIP peptides</fullName>
    </recommendedName>
    <component>
        <recommendedName>
            <fullName>Intestinal peptide PHV-42</fullName>
        </recommendedName>
        <alternativeName>
            <fullName>Peptide histidine valine 42</fullName>
            <shortName>PHV-42</shortName>
        </alternativeName>
    </component>
    <component>
        <recommendedName>
            <fullName>Intestinal peptide PHM-27</fullName>
        </recommendedName>
        <alternativeName>
            <fullName>Peptide histidine methioninamide 27</fullName>
            <shortName evidence="12">PHM-27</shortName>
        </alternativeName>
    </component>
    <component>
        <recommendedName>
            <fullName evidence="10">Vasoactive intestinal peptide</fullName>
            <shortName evidence="10">VIP</shortName>
        </recommendedName>
        <alternativeName>
            <fullName>Vasoactive intestinal polypeptide</fullName>
        </alternativeName>
    </component>
</protein>
<reference key="1">
    <citation type="journal article" date="1983" name="Nature">
        <title>Human preprovasoactive intestinal polypeptide contains a novel PHI-27-like peptide, PHM-27.</title>
        <authorList>
            <person name="Itoh N."/>
            <person name="Obata K."/>
            <person name="Yanaihara N."/>
            <person name="Okamoto H."/>
        </authorList>
    </citation>
    <scope>NUCLEOTIDE SEQUENCE [GENOMIC DNA]</scope>
</reference>
<reference key="2">
    <citation type="journal article" date="1985" name="DNA">
        <title>Structure of the human vasoactive intestinal polypeptide gene.</title>
        <authorList>
            <person name="Tsukada T."/>
            <person name="Horovitch S.J."/>
            <person name="Montminy M.R."/>
            <person name="Mandel G."/>
            <person name="Goodman R.H."/>
        </authorList>
    </citation>
    <scope>NUCLEOTIDE SEQUENCE [GENOMIC DNA]</scope>
</reference>
<reference key="3">
    <citation type="journal article" date="1985" name="Peptides 6 Suppl.">
        <title>Vasoactive intestinal peptide: expression of the prohormone in bacterial cells.</title>
        <authorList>
            <person name="Delamarter J.F."/>
            <person name="Buell G.N."/>
            <person name="Kawashima E."/>
            <person name="Polak J.M."/>
            <person name="Bloom S.R."/>
        </authorList>
    </citation>
    <scope>NUCLEOTIDE SEQUENCE [MRNA] (ISOFORM 1)</scope>
</reference>
<reference key="4">
    <citation type="journal article" date="1987" name="Proc. Natl. Acad. Sci. U.S.A.">
        <title>Structure and expression of the gene encoding the vasoactive intestinal peptide precursor.</title>
        <authorList>
            <person name="Linder S."/>
            <person name="Barkhem T."/>
            <person name="Norberg A."/>
            <person name="Persson H."/>
            <person name="Schalling M."/>
            <person name="Hoekfelt T."/>
            <person name="Magnusson G."/>
        </authorList>
    </citation>
    <scope>NUCLEOTIDE SEQUENCE [GENOMIC DNA]</scope>
</reference>
<reference key="5">
    <citation type="journal article" date="1988" name="Ann. N. Y. Acad. Sci.">
        <title>Complete nucleotide sequence of human vasoactive intestinal peptide/PHM-27 gene and its inducible promoter.</title>
        <authorList>
            <person name="Yamagami T."/>
            <person name="Ohsawa K."/>
            <person name="Nishizawa M."/>
            <person name="Inoue C."/>
            <person name="Gotoh E."/>
            <person name="Yanaihara N."/>
            <person name="Yamamoto H."/>
            <person name="Okamoto H."/>
        </authorList>
    </citation>
    <scope>NUCLEOTIDE SEQUENCE [GENOMIC DNA]</scope>
</reference>
<reference key="6">
    <citation type="journal article" date="2003" name="Nature">
        <title>The DNA sequence and analysis of human chromosome 6.</title>
        <authorList>
            <person name="Mungall A.J."/>
            <person name="Palmer S.A."/>
            <person name="Sims S.K."/>
            <person name="Edwards C.A."/>
            <person name="Ashurst J.L."/>
            <person name="Wilming L."/>
            <person name="Jones M.C."/>
            <person name="Horton R."/>
            <person name="Hunt S.E."/>
            <person name="Scott C.E."/>
            <person name="Gilbert J.G.R."/>
            <person name="Clamp M.E."/>
            <person name="Bethel G."/>
            <person name="Milne S."/>
            <person name="Ainscough R."/>
            <person name="Almeida J.P."/>
            <person name="Ambrose K.D."/>
            <person name="Andrews T.D."/>
            <person name="Ashwell R.I.S."/>
            <person name="Babbage A.K."/>
            <person name="Bagguley C.L."/>
            <person name="Bailey J."/>
            <person name="Banerjee R."/>
            <person name="Barker D.J."/>
            <person name="Barlow K.F."/>
            <person name="Bates K."/>
            <person name="Beare D.M."/>
            <person name="Beasley H."/>
            <person name="Beasley O."/>
            <person name="Bird C.P."/>
            <person name="Blakey S.E."/>
            <person name="Bray-Allen S."/>
            <person name="Brook J."/>
            <person name="Brown A.J."/>
            <person name="Brown J.Y."/>
            <person name="Burford D.C."/>
            <person name="Burrill W."/>
            <person name="Burton J."/>
            <person name="Carder C."/>
            <person name="Carter N.P."/>
            <person name="Chapman J.C."/>
            <person name="Clark S.Y."/>
            <person name="Clark G."/>
            <person name="Clee C.M."/>
            <person name="Clegg S."/>
            <person name="Cobley V."/>
            <person name="Collier R.E."/>
            <person name="Collins J.E."/>
            <person name="Colman L.K."/>
            <person name="Corby N.R."/>
            <person name="Coville G.J."/>
            <person name="Culley K.M."/>
            <person name="Dhami P."/>
            <person name="Davies J."/>
            <person name="Dunn M."/>
            <person name="Earthrowl M.E."/>
            <person name="Ellington A.E."/>
            <person name="Evans K.A."/>
            <person name="Faulkner L."/>
            <person name="Francis M.D."/>
            <person name="Frankish A."/>
            <person name="Frankland J."/>
            <person name="French L."/>
            <person name="Garner P."/>
            <person name="Garnett J."/>
            <person name="Ghori M.J."/>
            <person name="Gilby L.M."/>
            <person name="Gillson C.J."/>
            <person name="Glithero R.J."/>
            <person name="Grafham D.V."/>
            <person name="Grant M."/>
            <person name="Gribble S."/>
            <person name="Griffiths C."/>
            <person name="Griffiths M.N.D."/>
            <person name="Hall R."/>
            <person name="Halls K.S."/>
            <person name="Hammond S."/>
            <person name="Harley J.L."/>
            <person name="Hart E.A."/>
            <person name="Heath P.D."/>
            <person name="Heathcott R."/>
            <person name="Holmes S.J."/>
            <person name="Howden P.J."/>
            <person name="Howe K.L."/>
            <person name="Howell G.R."/>
            <person name="Huckle E."/>
            <person name="Humphray S.J."/>
            <person name="Humphries M.D."/>
            <person name="Hunt A.R."/>
            <person name="Johnson C.M."/>
            <person name="Joy A.A."/>
            <person name="Kay M."/>
            <person name="Keenan S.J."/>
            <person name="Kimberley A.M."/>
            <person name="King A."/>
            <person name="Laird G.K."/>
            <person name="Langford C."/>
            <person name="Lawlor S."/>
            <person name="Leongamornlert D.A."/>
            <person name="Leversha M."/>
            <person name="Lloyd C.R."/>
            <person name="Lloyd D.M."/>
            <person name="Loveland J.E."/>
            <person name="Lovell J."/>
            <person name="Martin S."/>
            <person name="Mashreghi-Mohammadi M."/>
            <person name="Maslen G.L."/>
            <person name="Matthews L."/>
            <person name="McCann O.T."/>
            <person name="McLaren S.J."/>
            <person name="McLay K."/>
            <person name="McMurray A."/>
            <person name="Moore M.J.F."/>
            <person name="Mullikin J.C."/>
            <person name="Niblett D."/>
            <person name="Nickerson T."/>
            <person name="Novik K.L."/>
            <person name="Oliver K."/>
            <person name="Overton-Larty E.K."/>
            <person name="Parker A."/>
            <person name="Patel R."/>
            <person name="Pearce A.V."/>
            <person name="Peck A.I."/>
            <person name="Phillimore B.J.C.T."/>
            <person name="Phillips S."/>
            <person name="Plumb R.W."/>
            <person name="Porter K.M."/>
            <person name="Ramsey Y."/>
            <person name="Ranby S.A."/>
            <person name="Rice C.M."/>
            <person name="Ross M.T."/>
            <person name="Searle S.M."/>
            <person name="Sehra H.K."/>
            <person name="Sheridan E."/>
            <person name="Skuce C.D."/>
            <person name="Smith S."/>
            <person name="Smith M."/>
            <person name="Spraggon L."/>
            <person name="Squares S.L."/>
            <person name="Steward C.A."/>
            <person name="Sycamore N."/>
            <person name="Tamlyn-Hall G."/>
            <person name="Tester J."/>
            <person name="Theaker A.J."/>
            <person name="Thomas D.W."/>
            <person name="Thorpe A."/>
            <person name="Tracey A."/>
            <person name="Tromans A."/>
            <person name="Tubby B."/>
            <person name="Wall M."/>
            <person name="Wallis J.M."/>
            <person name="West A.P."/>
            <person name="White S.S."/>
            <person name="Whitehead S.L."/>
            <person name="Whittaker H."/>
            <person name="Wild A."/>
            <person name="Willey D.J."/>
            <person name="Wilmer T.E."/>
            <person name="Wood J.M."/>
            <person name="Wray P.W."/>
            <person name="Wyatt J.C."/>
            <person name="Young L."/>
            <person name="Younger R.M."/>
            <person name="Bentley D.R."/>
            <person name="Coulson A."/>
            <person name="Durbin R.M."/>
            <person name="Hubbard T."/>
            <person name="Sulston J.E."/>
            <person name="Dunham I."/>
            <person name="Rogers J."/>
            <person name="Beck S."/>
        </authorList>
    </citation>
    <scope>NUCLEOTIDE SEQUENCE [LARGE SCALE GENOMIC DNA]</scope>
</reference>
<reference key="7">
    <citation type="journal article" date="2004" name="Genome Res.">
        <title>The status, quality, and expansion of the NIH full-length cDNA project: the Mammalian Gene Collection (MGC).</title>
        <authorList>
            <consortium name="The MGC Project Team"/>
        </authorList>
    </citation>
    <scope>NUCLEOTIDE SEQUENCE [LARGE SCALE MRNA] (ISOFORM 2)</scope>
    <source>
        <tissue>Prostate</tissue>
    </source>
</reference>
<reference key="8">
    <citation type="journal article" date="1986" name="Peptides">
        <title>Structure and expression of the vasoactive intestinal peptide (VIP) gene in a human tumor.</title>
        <authorList>
            <person name="Gozes I."/>
            <person name="Bodener M."/>
            <person name="Shani Y."/>
            <person name="Fridkin M."/>
        </authorList>
    </citation>
    <scope>NUCLEOTIDE SEQUENCE [GENOMIC DNA] OF 8-170</scope>
    <scope>AMIDATION AT MET-107 AND ASN-152</scope>
</reference>
<reference key="9">
    <citation type="journal article" date="1983" name="Lancet">
        <title>Diarrhoea in vipoma patients associated with cosecretion of a second active peptide (peptide histidine isoleucine) explained by single coding gene.</title>
        <authorList>
            <person name="Bloom S.R."/>
            <person name="Delamarter J.F."/>
            <person name="Kawashima E."/>
            <person name="Christofides N.D."/>
            <person name="Buell G."/>
            <person name="Polak J.M."/>
        </authorList>
    </citation>
    <scope>NUCLEOTIDE SEQUENCE [MRNA] OF 50-170 (ISOFORM 1)</scope>
    <source>
        <tissue>Pancreatic carcinoma</tissue>
    </source>
</reference>
<reference key="10">
    <citation type="journal article" date="1987" name="J. Neurochem.">
        <title>Vasoactive intestinal peptide gene: putative mechanism of information storage at the RNA level.</title>
        <authorList>
            <person name="Gozes I."/>
            <person name="Giladi E."/>
            <person name="Shani Y."/>
        </authorList>
    </citation>
    <scope>NUCLEOTIDE SEQUENCE [GENOMIC DNA] OF 78-155</scope>
</reference>
<reference key="11">
    <citation type="journal article" date="1987" name="J. Biol. Chem.">
        <title>Isolation, characterization, and pharmacological actions of peptide histidine valine 42, a novel prepro-vasoactive intestinal peptide-derived peptide.</title>
        <authorList>
            <person name="Yiangou Y."/>
            <person name="di Marzo V."/>
            <person name="Spokes R.A."/>
            <person name="Panico M."/>
            <person name="Morris H.R."/>
            <person name="Bloom S.R."/>
        </authorList>
    </citation>
    <scope>PROTEIN SEQUENCE OF 81-122</scope>
    <scope>FUNCTION (PHV-42)</scope>
</reference>
<reference key="12">
    <citation type="journal article" date="1992" name="Biochem. Biophys. Res. Commun.">
        <title>Isolation and characterization of peptides which act on rat platelets, from a pheochromocytoma.</title>
        <authorList>
            <person name="Kitamura K."/>
            <person name="Kangawa K."/>
            <person name="Kawamoto M."/>
            <person name="Ichiki Y."/>
            <person name="Matsuo H."/>
            <person name="Eto T."/>
        </authorList>
    </citation>
    <scope>PROTEIN SEQUENCE OF 127-152</scope>
    <scope>FUNCTION</scope>
    <source>
        <tissue>Pheochromocytoma</tissue>
    </source>
</reference>
<reference key="13">
    <citation type="journal article" date="1986" name="Proc. Natl. Acad. Sci. U.S.A.">
        <title>Vasoactive intestinal peptide and electrical activity influence neuronal survival.</title>
        <authorList>
            <person name="Brenneman D.E."/>
            <person name="Eiden L.E."/>
        </authorList>
    </citation>
    <scope>FUNCTION</scope>
</reference>
<reference key="14">
    <citation type="journal article" date="1996" name="J. Neuroendocrinol.">
        <title>Tissue specific expression of different human receptor types for pituitary adenylate cyclase activating polypeptide and vasoactive intestinal polypeptide: implications for their role in human physiology.</title>
        <authorList>
            <person name="Wei Y."/>
            <person name="Mojsov S."/>
        </authorList>
    </citation>
    <scope>FUNCTION</scope>
    <source>
        <tissue>Adipose tissue</tissue>
    </source>
</reference>
<reference key="15">
    <citation type="journal article" date="2004" name="Biochem. Pharmacol.">
        <title>Discovery of novel peptide/receptor interactions: identification of PHM-27 as a potent agonist of the human calcitonin receptor.</title>
        <authorList>
            <person name="Ma J.N."/>
            <person name="Currier E.A."/>
            <person name="Essex A."/>
            <person name="Feddock M."/>
            <person name="Spalding T.A."/>
            <person name="Nash N.R."/>
            <person name="Brann M.R."/>
            <person name="Burstein E.S."/>
        </authorList>
    </citation>
    <scope>FUNCTION (PHM-27)</scope>
</reference>
<reference key="16">
    <citation type="journal article" date="1991" name="Biopolymers">
        <title>Structural determination of the vasoactive intestinal peptide by two-dimensional H-NMR spectroscopy.</title>
        <authorList>
            <person name="Theriault Y."/>
            <person name="Boulanger Y."/>
            <person name="St Pierre S."/>
        </authorList>
    </citation>
    <scope>STRUCTURE BY NMR OF VIP</scope>
</reference>
<reference evidence="15" key="17">
    <citation type="journal article" date="2022" name="Nat. Commun.">
        <title>Understanding VPAC receptor family peptide binding and selectivity.</title>
        <authorList>
            <person name="Piper S.J."/>
            <person name="Deganutti G."/>
            <person name="Lu J."/>
            <person name="Zhao P."/>
            <person name="Liang Y.L."/>
            <person name="Lu Y."/>
            <person name="Fletcher M.M."/>
            <person name="Hossain M.A."/>
            <person name="Christopoulos A."/>
            <person name="Reynolds C.A."/>
            <person name="Danev R."/>
            <person name="Sexton P.M."/>
            <person name="Wootten D."/>
        </authorList>
    </citation>
    <scope>STRUCTURE BY ELECTRON MICROSCOPY (2.70 ANGSTROMS) OF 125-152 IN COMPLEX WITH VIPR1</scope>
    <scope>FUNCTION</scope>
</reference>
<gene>
    <name evidence="14" type="primary">VIP</name>
</gene>
<evidence type="ECO:0000250" key="1">
    <source>
        <dbReference type="UniProtKB" id="P01283"/>
    </source>
</evidence>
<evidence type="ECO:0000255" key="2"/>
<evidence type="ECO:0000269" key="3">
    <source>
    </source>
</evidence>
<evidence type="ECO:0000269" key="4">
    <source>
    </source>
</evidence>
<evidence type="ECO:0000269" key="5">
    <source>
    </source>
</evidence>
<evidence type="ECO:0000269" key="6">
    <source>
    </source>
</evidence>
<evidence type="ECO:0000269" key="7">
    <source>
    </source>
</evidence>
<evidence type="ECO:0000269" key="8">
    <source>
    </source>
</evidence>
<evidence type="ECO:0000269" key="9">
    <source>
    </source>
</evidence>
<evidence type="ECO:0000303" key="10">
    <source>
    </source>
</evidence>
<evidence type="ECO:0000303" key="11">
    <source>
    </source>
</evidence>
<evidence type="ECO:0000303" key="12">
    <source>
    </source>
</evidence>
<evidence type="ECO:0000305" key="13"/>
<evidence type="ECO:0000312" key="14">
    <source>
        <dbReference type="HGNC" id="HGNC:12693"/>
    </source>
</evidence>
<evidence type="ECO:0007744" key="15">
    <source>
        <dbReference type="PDB" id="8E3Z"/>
    </source>
</evidence>
<evidence type="ECO:0007829" key="16">
    <source>
        <dbReference type="PDB" id="8E3Z"/>
    </source>
</evidence>
<dbReference type="EMBL" id="L00157">
    <property type="protein sequence ID" value="AAA61289.1"/>
    <property type="molecule type" value="Genomic_DNA"/>
</dbReference>
<dbReference type="EMBL" id="L00154">
    <property type="protein sequence ID" value="AAA61289.1"/>
    <property type="status" value="JOINED"/>
    <property type="molecule type" value="Genomic_DNA"/>
</dbReference>
<dbReference type="EMBL" id="L00155">
    <property type="protein sequence ID" value="AAA61289.1"/>
    <property type="status" value="JOINED"/>
    <property type="molecule type" value="Genomic_DNA"/>
</dbReference>
<dbReference type="EMBL" id="L00156">
    <property type="protein sequence ID" value="AAA61289.1"/>
    <property type="status" value="JOINED"/>
    <property type="molecule type" value="Genomic_DNA"/>
</dbReference>
<dbReference type="EMBL" id="M11553">
    <property type="protein sequence ID" value="AAA61284.1"/>
    <property type="molecule type" value="Genomic_DNA"/>
</dbReference>
<dbReference type="EMBL" id="M11549">
    <property type="protein sequence ID" value="AAA61284.1"/>
    <property type="status" value="JOINED"/>
    <property type="molecule type" value="Genomic_DNA"/>
</dbReference>
<dbReference type="EMBL" id="M11550">
    <property type="protein sequence ID" value="AAA61284.1"/>
    <property type="status" value="JOINED"/>
    <property type="molecule type" value="Genomic_DNA"/>
</dbReference>
<dbReference type="EMBL" id="M11551">
    <property type="protein sequence ID" value="AAA61284.1"/>
    <property type="status" value="JOINED"/>
    <property type="molecule type" value="Genomic_DNA"/>
</dbReference>
<dbReference type="EMBL" id="M11552">
    <property type="protein sequence ID" value="AAA61284.1"/>
    <property type="status" value="JOINED"/>
    <property type="molecule type" value="Genomic_DNA"/>
</dbReference>
<dbReference type="EMBL" id="M36634">
    <property type="protein sequence ID" value="AAA61287.1"/>
    <property type="molecule type" value="mRNA"/>
</dbReference>
<dbReference type="EMBL" id="M14623">
    <property type="protein sequence ID" value="AAA61288.1"/>
    <property type="molecule type" value="Genomic_DNA"/>
</dbReference>
<dbReference type="EMBL" id="M14619">
    <property type="protein sequence ID" value="AAA61288.1"/>
    <property type="status" value="JOINED"/>
    <property type="molecule type" value="Genomic_DNA"/>
</dbReference>
<dbReference type="EMBL" id="M14620">
    <property type="protein sequence ID" value="AAA61288.1"/>
    <property type="status" value="JOINED"/>
    <property type="molecule type" value="Genomic_DNA"/>
</dbReference>
<dbReference type="EMBL" id="M14621">
    <property type="protein sequence ID" value="AAA61288.1"/>
    <property type="status" value="JOINED"/>
    <property type="molecule type" value="Genomic_DNA"/>
</dbReference>
<dbReference type="EMBL" id="M14622">
    <property type="protein sequence ID" value="AAA61288.1"/>
    <property type="status" value="JOINED"/>
    <property type="molecule type" value="Genomic_DNA"/>
</dbReference>
<dbReference type="EMBL" id="M33027">
    <property type="protein sequence ID" value="AAA69515.1"/>
    <property type="molecule type" value="Genomic_DNA"/>
</dbReference>
<dbReference type="EMBL" id="AL133356">
    <property type="status" value="NOT_ANNOTATED_CDS"/>
    <property type="molecule type" value="Genomic_DNA"/>
</dbReference>
<dbReference type="EMBL" id="BC009794">
    <property type="protein sequence ID" value="AAH09794.1"/>
    <property type="molecule type" value="mRNA"/>
</dbReference>
<dbReference type="EMBL" id="M36610">
    <property type="protein sequence ID" value="AAA61286.1"/>
    <property type="molecule type" value="Genomic_DNA"/>
</dbReference>
<dbReference type="EMBL" id="M36606">
    <property type="protein sequence ID" value="AAA61286.1"/>
    <property type="status" value="JOINED"/>
    <property type="molecule type" value="Genomic_DNA"/>
</dbReference>
<dbReference type="EMBL" id="M36607">
    <property type="protein sequence ID" value="AAA61286.1"/>
    <property type="status" value="JOINED"/>
    <property type="molecule type" value="Genomic_DNA"/>
</dbReference>
<dbReference type="EMBL" id="M36608">
    <property type="protein sequence ID" value="AAA61286.1"/>
    <property type="status" value="JOINED"/>
    <property type="molecule type" value="Genomic_DNA"/>
</dbReference>
<dbReference type="EMBL" id="M36609">
    <property type="protein sequence ID" value="AAA61286.1"/>
    <property type="status" value="JOINED"/>
    <property type="molecule type" value="Genomic_DNA"/>
</dbReference>
<dbReference type="EMBL" id="M54930">
    <property type="protein sequence ID" value="AAA63268.1"/>
    <property type="molecule type" value="mRNA"/>
</dbReference>
<dbReference type="EMBL" id="M32162">
    <property type="protein sequence ID" value="AAA61285.1"/>
    <property type="molecule type" value="Genomic_DNA"/>
</dbReference>
<dbReference type="EMBL" id="M31645">
    <property type="protein sequence ID" value="AAA61285.1"/>
    <property type="status" value="JOINED"/>
    <property type="molecule type" value="Genomic_DNA"/>
</dbReference>
<dbReference type="CCDS" id="CCDS5240.1">
    <molecule id="P01282-1"/>
</dbReference>
<dbReference type="CCDS" id="CCDS5241.1">
    <molecule id="P01282-2"/>
</dbReference>
<dbReference type="PIR" id="A23296">
    <property type="entry name" value="VRHU"/>
</dbReference>
<dbReference type="RefSeq" id="NP_003372.1">
    <molecule id="P01282-1"/>
    <property type="nucleotide sequence ID" value="NM_003381.4"/>
</dbReference>
<dbReference type="RefSeq" id="NP_919416.1">
    <molecule id="P01282-2"/>
    <property type="nucleotide sequence ID" value="NM_194435.3"/>
</dbReference>
<dbReference type="PDB" id="2RRH">
    <property type="method" value="NMR"/>
    <property type="chains" value="A=125-153"/>
</dbReference>
<dbReference type="PDB" id="2RRI">
    <property type="method" value="NMR"/>
    <property type="chains" value="A=125-153"/>
</dbReference>
<dbReference type="PDB" id="8E3Z">
    <property type="method" value="EM"/>
    <property type="resolution" value="2.70 A"/>
    <property type="chains" value="P=125-152"/>
</dbReference>
<dbReference type="PDBsum" id="2RRH"/>
<dbReference type="PDBsum" id="2RRI"/>
<dbReference type="PDBsum" id="8E3Z"/>
<dbReference type="BMRB" id="P01282"/>
<dbReference type="EMDB" id="EMD-27874"/>
<dbReference type="SMR" id="P01282"/>
<dbReference type="BioGRID" id="113273">
    <property type="interactions" value="19"/>
</dbReference>
<dbReference type="FunCoup" id="P01282">
    <property type="interactions" value="540"/>
</dbReference>
<dbReference type="IntAct" id="P01282">
    <property type="interactions" value="19"/>
</dbReference>
<dbReference type="MINT" id="P01282"/>
<dbReference type="STRING" id="9606.ENSP00000356213"/>
<dbReference type="BindingDB" id="P01282"/>
<dbReference type="ChEMBL" id="CHEMBL5737"/>
<dbReference type="iPTMnet" id="P01282"/>
<dbReference type="PhosphoSitePlus" id="P01282"/>
<dbReference type="BioMuta" id="VIP"/>
<dbReference type="DMDM" id="138574"/>
<dbReference type="jPOST" id="P01282"/>
<dbReference type="MassIVE" id="P01282"/>
<dbReference type="PaxDb" id="9606-ENSP00000356213"/>
<dbReference type="PeptideAtlas" id="P01282"/>
<dbReference type="ProteomicsDB" id="51368">
    <molecule id="P01282-1"/>
</dbReference>
<dbReference type="ProteomicsDB" id="51369">
    <molecule id="P01282-2"/>
</dbReference>
<dbReference type="ABCD" id="P01282">
    <property type="antibodies" value="2 sequenced antibodies"/>
</dbReference>
<dbReference type="Antibodypedia" id="3435">
    <property type="antibodies" value="574 antibodies from 41 providers"/>
</dbReference>
<dbReference type="DNASU" id="7432"/>
<dbReference type="Ensembl" id="ENST00000367243.7">
    <molecule id="P01282-2"/>
    <property type="protein sequence ID" value="ENSP00000356212.3"/>
    <property type="gene ID" value="ENSG00000146469.13"/>
</dbReference>
<dbReference type="Ensembl" id="ENST00000367244.8">
    <molecule id="P01282-1"/>
    <property type="protein sequence ID" value="ENSP00000356213.3"/>
    <property type="gene ID" value="ENSG00000146469.13"/>
</dbReference>
<dbReference type="GeneID" id="7432"/>
<dbReference type="KEGG" id="hsa:7432"/>
<dbReference type="MANE-Select" id="ENST00000367244.8">
    <property type="protein sequence ID" value="ENSP00000356213.3"/>
    <property type="RefSeq nucleotide sequence ID" value="NM_003381.4"/>
    <property type="RefSeq protein sequence ID" value="NP_003372.1"/>
</dbReference>
<dbReference type="UCSC" id="uc003qpe.6">
    <molecule id="P01282-1"/>
    <property type="organism name" value="human"/>
</dbReference>
<dbReference type="AGR" id="HGNC:12693"/>
<dbReference type="CTD" id="7432"/>
<dbReference type="DisGeNET" id="7432"/>
<dbReference type="GeneCards" id="VIP"/>
<dbReference type="HGNC" id="HGNC:12693">
    <property type="gene designation" value="VIP"/>
</dbReference>
<dbReference type="HPA" id="ENSG00000146469">
    <property type="expression patterns" value="Tissue enhanced (intestine, lymphoid tissue)"/>
</dbReference>
<dbReference type="MIM" id="192320">
    <property type="type" value="gene"/>
</dbReference>
<dbReference type="neXtProt" id="NX_P01282"/>
<dbReference type="OpenTargets" id="ENSG00000146469"/>
<dbReference type="PharmGKB" id="PA37312"/>
<dbReference type="VEuPathDB" id="HostDB:ENSG00000146469"/>
<dbReference type="eggNOG" id="ENOG502QVTA">
    <property type="taxonomic scope" value="Eukaryota"/>
</dbReference>
<dbReference type="GeneTree" id="ENSGT00950000183154"/>
<dbReference type="HOGENOM" id="CLU_133877_1_0_1"/>
<dbReference type="InParanoid" id="P01282"/>
<dbReference type="OMA" id="MEVRSKP"/>
<dbReference type="OrthoDB" id="8795594at2759"/>
<dbReference type="PAN-GO" id="P01282">
    <property type="GO annotations" value="17 GO annotations based on evolutionary models"/>
</dbReference>
<dbReference type="PhylomeDB" id="P01282"/>
<dbReference type="TreeFam" id="TF332804"/>
<dbReference type="PathwayCommons" id="P01282"/>
<dbReference type="Reactome" id="R-HSA-418555">
    <property type="pathway name" value="G alpha (s) signalling events"/>
</dbReference>
<dbReference type="Reactome" id="R-HSA-420092">
    <property type="pathway name" value="Glucagon-type ligand receptors"/>
</dbReference>
<dbReference type="SignaLink" id="P01282"/>
<dbReference type="SIGNOR" id="P01282"/>
<dbReference type="BioGRID-ORCS" id="7432">
    <property type="hits" value="13 hits in 1145 CRISPR screens"/>
</dbReference>
<dbReference type="EvolutionaryTrace" id="P01282"/>
<dbReference type="GeneWiki" id="Vasoactive_intestinal_peptide"/>
<dbReference type="GenomeRNAi" id="7432"/>
<dbReference type="Pharos" id="P01282">
    <property type="development level" value="Tbio"/>
</dbReference>
<dbReference type="PRO" id="PR:P01282"/>
<dbReference type="Proteomes" id="UP000005640">
    <property type="component" value="Chromosome 6"/>
</dbReference>
<dbReference type="RNAct" id="P01282">
    <property type="molecule type" value="protein"/>
</dbReference>
<dbReference type="Bgee" id="ENSG00000146469">
    <property type="expression patterns" value="Expressed in vermiform appendix and 115 other cell types or tissues"/>
</dbReference>
<dbReference type="ExpressionAtlas" id="P01282">
    <property type="expression patterns" value="baseline and differential"/>
</dbReference>
<dbReference type="GO" id="GO:0005576">
    <property type="term" value="C:extracellular region"/>
    <property type="evidence" value="ECO:0000304"/>
    <property type="project" value="Reactome"/>
</dbReference>
<dbReference type="GO" id="GO:0005615">
    <property type="term" value="C:extracellular space"/>
    <property type="evidence" value="ECO:0000314"/>
    <property type="project" value="UniProt"/>
</dbReference>
<dbReference type="GO" id="GO:0043005">
    <property type="term" value="C:neuron projection"/>
    <property type="evidence" value="ECO:0000318"/>
    <property type="project" value="GO_Central"/>
</dbReference>
<dbReference type="GO" id="GO:0005179">
    <property type="term" value="F:hormone activity"/>
    <property type="evidence" value="ECO:0000314"/>
    <property type="project" value="BHF-UCL"/>
</dbReference>
<dbReference type="GO" id="GO:0005184">
    <property type="term" value="F:neuropeptide hormone activity"/>
    <property type="evidence" value="ECO:0000314"/>
    <property type="project" value="UniProtKB"/>
</dbReference>
<dbReference type="GO" id="GO:0051428">
    <property type="term" value="F:peptide hormone receptor binding"/>
    <property type="evidence" value="ECO:0000353"/>
    <property type="project" value="GO_Central"/>
</dbReference>
<dbReference type="GO" id="GO:0031891">
    <property type="term" value="F:type 1 vasoactive intestinal polypeptide receptor binding"/>
    <property type="evidence" value="ECO:0000314"/>
    <property type="project" value="UniProtKB"/>
</dbReference>
<dbReference type="GO" id="GO:0031892">
    <property type="term" value="F:type 2 vasoactive intestinal polypeptide receptor binding"/>
    <property type="evidence" value="ECO:0000314"/>
    <property type="project" value="UniProt"/>
</dbReference>
<dbReference type="GO" id="GO:0007189">
    <property type="term" value="P:adenylate cyclase-activating G protein-coupled receptor signaling pathway"/>
    <property type="evidence" value="ECO:0000314"/>
    <property type="project" value="UniProtKB"/>
</dbReference>
<dbReference type="GO" id="GO:0007589">
    <property type="term" value="P:body fluid secretion"/>
    <property type="evidence" value="ECO:0000304"/>
    <property type="project" value="ProtInc"/>
</dbReference>
<dbReference type="GO" id="GO:0048242">
    <property type="term" value="P:epinephrine secretion"/>
    <property type="evidence" value="ECO:0000318"/>
    <property type="project" value="GO_Central"/>
</dbReference>
<dbReference type="GO" id="GO:0007186">
    <property type="term" value="P:G protein-coupled receptor signaling pathway"/>
    <property type="evidence" value="ECO:0000304"/>
    <property type="project" value="ProtInc"/>
</dbReference>
<dbReference type="GO" id="GO:0048255">
    <property type="term" value="P:mRNA stabilization"/>
    <property type="evidence" value="ECO:0000250"/>
    <property type="project" value="AgBase"/>
</dbReference>
<dbReference type="GO" id="GO:0008284">
    <property type="term" value="P:positive regulation of cell population proliferation"/>
    <property type="evidence" value="ECO:0000304"/>
    <property type="project" value="ProtInc"/>
</dbReference>
<dbReference type="GO" id="GO:0045732">
    <property type="term" value="P:positive regulation of protein catabolic process"/>
    <property type="evidence" value="ECO:0000314"/>
    <property type="project" value="BHF-UCL"/>
</dbReference>
<dbReference type="GO" id="GO:0070459">
    <property type="term" value="P:prolactin secretion"/>
    <property type="evidence" value="ECO:0000250"/>
    <property type="project" value="AgBase"/>
</dbReference>
<dbReference type="GO" id="GO:0032880">
    <property type="term" value="P:regulation of protein localization"/>
    <property type="evidence" value="ECO:0000314"/>
    <property type="project" value="BHF-UCL"/>
</dbReference>
<dbReference type="Gene3D" id="6.10.250.590">
    <property type="match status" value="2"/>
</dbReference>
<dbReference type="InterPro" id="IPR000532">
    <property type="entry name" value="Glucagon_GIP_secretin_VIP"/>
</dbReference>
<dbReference type="InterPro" id="IPR046963">
    <property type="entry name" value="VIP/GHRH-like"/>
</dbReference>
<dbReference type="PANTHER" id="PTHR11213">
    <property type="entry name" value="GLUCAGON-FAMILY NEUROPEPTIDE"/>
    <property type="match status" value="1"/>
</dbReference>
<dbReference type="PANTHER" id="PTHR11213:SF5">
    <property type="entry name" value="VIP PEPTIDES"/>
    <property type="match status" value="1"/>
</dbReference>
<dbReference type="Pfam" id="PF00123">
    <property type="entry name" value="Hormone_2"/>
    <property type="match status" value="2"/>
</dbReference>
<dbReference type="SMART" id="SM00070">
    <property type="entry name" value="GLUCA"/>
    <property type="match status" value="2"/>
</dbReference>
<dbReference type="PROSITE" id="PS00260">
    <property type="entry name" value="GLUCAGON"/>
    <property type="match status" value="2"/>
</dbReference>